<proteinExistence type="evidence at protein level"/>
<organism>
    <name type="scientific">Homo sapiens</name>
    <name type="common">Human</name>
    <dbReference type="NCBI Taxonomy" id="9606"/>
    <lineage>
        <taxon>Eukaryota</taxon>
        <taxon>Metazoa</taxon>
        <taxon>Chordata</taxon>
        <taxon>Craniata</taxon>
        <taxon>Vertebrata</taxon>
        <taxon>Euteleostomi</taxon>
        <taxon>Mammalia</taxon>
        <taxon>Eutheria</taxon>
        <taxon>Euarchontoglires</taxon>
        <taxon>Primates</taxon>
        <taxon>Haplorrhini</taxon>
        <taxon>Catarrhini</taxon>
        <taxon>Hominidae</taxon>
        <taxon>Homo</taxon>
    </lineage>
</organism>
<feature type="chain" id="PRO_0000171752" description="DNA dC-&gt;dU-editing enzyme APOBEC-3A">
    <location>
        <begin position="1"/>
        <end position="199"/>
    </location>
</feature>
<feature type="domain" description="CMP/dCMP-type deaminase" evidence="2">
    <location>
        <begin position="27"/>
        <end position="143"/>
    </location>
</feature>
<feature type="active site" description="Proton donor" evidence="1">
    <location>
        <position position="72"/>
    </location>
</feature>
<feature type="binding site" evidence="1">
    <location>
        <position position="70"/>
    </location>
    <ligand>
        <name>Zn(2+)</name>
        <dbReference type="ChEBI" id="CHEBI:29105"/>
        <note>catalytic</note>
    </ligand>
</feature>
<feature type="binding site" evidence="1">
    <location>
        <position position="101"/>
    </location>
    <ligand>
        <name>Zn(2+)</name>
        <dbReference type="ChEBI" id="CHEBI:29105"/>
        <note>catalytic</note>
    </ligand>
</feature>
<feature type="binding site" evidence="1">
    <location>
        <position position="106"/>
    </location>
    <ligand>
        <name>Zn(2+)</name>
        <dbReference type="ChEBI" id="CHEBI:29105"/>
        <note>catalytic</note>
    </ligand>
</feature>
<feature type="splice variant" id="VSP_041723" description="In isoform 2." evidence="19">
    <location>
        <begin position="1"/>
        <end position="12"/>
    </location>
</feature>
<feature type="sequence variant" id="VAR_048721" description="In dbSNP:rs17000556.">
    <original>T</original>
    <variation>A</variation>
    <location>
        <position position="19"/>
    </location>
</feature>
<feature type="mutagenesis site" description="No effect on deaminase activity despite an altered restriction activity towards genetic invaders." evidence="11">
    <original>R</original>
    <variation>E</variation>
    <location>
        <position position="28"/>
    </location>
</feature>
<feature type="mutagenesis site" description="Altered deaminase activity and restriction activity towards genetic invaders." evidence="11">
    <original>H</original>
    <variation>A</variation>
    <location>
        <position position="29"/>
    </location>
</feature>
<feature type="mutagenesis site" description="Altered deaminase activity and restriction activity towards genetic invaders." evidence="11">
    <original>K</original>
    <variation>F</variation>
    <location>
        <position position="30"/>
    </location>
</feature>
<feature type="mutagenesis site" description="Altered deaminase activity and restriction activity towards genetic invaders." evidence="11">
    <original>N</original>
    <variation>A</variation>
    <location>
        <position position="57"/>
    </location>
</feature>
<feature type="mutagenesis site" description="Altered deaminase activity and restriction activity towards genetic invaders." evidence="11">
    <original>K</original>
    <variation>A</variation>
    <location>
        <position position="60"/>
    </location>
</feature>
<feature type="mutagenesis site" description="Altered deaminase activity and restriction activity towards genetic invaders." evidence="11">
    <original>R</original>
    <variation>A</variation>
    <location>
        <position position="69"/>
    </location>
</feature>
<feature type="mutagenesis site" description="Altered deaminase activity." evidence="6">
    <original>H</original>
    <variation>R</variation>
    <location>
        <position position="70"/>
    </location>
</feature>
<feature type="mutagenesis site" description="Altered deaminase activity and restriction activity towards genetic invaders." evidence="6 11">
    <original>E</original>
    <variation>Q</variation>
    <location>
        <position position="72"/>
    </location>
</feature>
<feature type="mutagenesis site" description="Altered deaminase activity and restriction activity towards genetic invaders." evidence="11">
    <original>W</original>
    <variation>L</variation>
    <location>
        <position position="98"/>
    </location>
</feature>
<feature type="mutagenesis site" description="Altered deaminase activity." evidence="6">
    <original>C</original>
    <variation>S</variation>
    <location>
        <position position="106"/>
    </location>
</feature>
<feature type="mutagenesis site" description="Altered deaminase activity and restriction activity towards genetic invaders." evidence="11">
    <original>R</original>
    <variation>A</variation>
    <location>
        <position position="128"/>
    </location>
</feature>
<feature type="mutagenesis site" description="Altered deaminase activity and restriction activity towards genetic invaders." evidence="11">
    <original>Y</original>
    <variation>A</variation>
    <location>
        <position position="130"/>
    </location>
</feature>
<feature type="mutagenesis site" description="No effect on deaminase activity despite an altered restriction activity towards genetic invaders." evidence="11">
    <original>D</original>
    <variation>N</variation>
    <location>
        <position position="131"/>
    </location>
</feature>
<feature type="mutagenesis site" description="Altered deaminase activity and restriction activity towards genetic invaders." evidence="11">
    <original>D</original>
    <variation>N</variation>
    <location>
        <position position="133"/>
    </location>
</feature>
<feature type="mutagenesis site" description="Altered deaminase activity and restriction activity towards genetic invaders." evidence="11">
    <original>Y</original>
    <variation>A</variation>
    <location>
        <position position="136"/>
    </location>
</feature>
<feature type="strand" evidence="22">
    <location>
        <begin position="6"/>
        <end position="8"/>
    </location>
</feature>
<feature type="helix" evidence="23">
    <location>
        <begin position="15"/>
        <end position="21"/>
    </location>
</feature>
<feature type="strand" evidence="24">
    <location>
        <begin position="24"/>
        <end position="26"/>
    </location>
</feature>
<feature type="strand" evidence="20">
    <location>
        <begin position="27"/>
        <end position="29"/>
    </location>
</feature>
<feature type="strand" evidence="23">
    <location>
        <begin position="32"/>
        <end position="40"/>
    </location>
</feature>
<feature type="strand" evidence="24">
    <location>
        <begin position="41"/>
        <end position="44"/>
    </location>
</feature>
<feature type="strand" evidence="23">
    <location>
        <begin position="45"/>
        <end position="56"/>
    </location>
</feature>
<feature type="helix" evidence="23">
    <location>
        <begin position="62"/>
        <end position="64"/>
    </location>
</feature>
<feature type="helix" evidence="23">
    <location>
        <begin position="71"/>
        <end position="82"/>
    </location>
</feature>
<feature type="strand" evidence="23">
    <location>
        <begin position="88"/>
        <end position="98"/>
    </location>
</feature>
<feature type="turn" evidence="24">
    <location>
        <begin position="102"/>
        <end position="105"/>
    </location>
</feature>
<feature type="helix" evidence="23">
    <location>
        <begin position="106"/>
        <end position="116"/>
    </location>
</feature>
<feature type="strand" evidence="23">
    <location>
        <begin position="120"/>
        <end position="128"/>
    </location>
</feature>
<feature type="helix" evidence="23">
    <location>
        <begin position="136"/>
        <end position="145"/>
    </location>
</feature>
<feature type="strand" evidence="23">
    <location>
        <begin position="149"/>
        <end position="152"/>
    </location>
</feature>
<feature type="helix" evidence="23">
    <location>
        <begin position="155"/>
        <end position="165"/>
    </location>
</feature>
<feature type="helix" evidence="23">
    <location>
        <begin position="179"/>
        <end position="195"/>
    </location>
</feature>
<feature type="turn" evidence="21">
    <location>
        <begin position="196"/>
        <end position="198"/>
    </location>
</feature>
<dbReference type="EC" id="3.5.4.38" evidence="6 8 10 11"/>
<dbReference type="EMBL" id="U03891">
    <property type="protein sequence ID" value="AAA03706.2"/>
    <property type="molecule type" value="mRNA"/>
</dbReference>
<dbReference type="EMBL" id="CR456393">
    <property type="protein sequence ID" value="CAG30279.1"/>
    <property type="molecule type" value="mRNA"/>
</dbReference>
<dbReference type="EMBL" id="AL022318">
    <property type="status" value="NOT_ANNOTATED_CDS"/>
    <property type="molecule type" value="Genomic_DNA"/>
</dbReference>
<dbReference type="EMBL" id="BC126416">
    <property type="protein sequence ID" value="AAI26417.1"/>
    <property type="molecule type" value="mRNA"/>
</dbReference>
<dbReference type="CCDS" id="CCDS13981.1">
    <molecule id="P31941-1"/>
</dbReference>
<dbReference type="PIR" id="G01233">
    <property type="entry name" value="G01233"/>
</dbReference>
<dbReference type="RefSeq" id="NP_001180218.1">
    <molecule id="P31941-1"/>
    <property type="nucleotide sequence ID" value="NM_001193289.1"/>
</dbReference>
<dbReference type="RefSeq" id="NP_663745.1">
    <molecule id="P31941-1"/>
    <property type="nucleotide sequence ID" value="NM_145699.4"/>
</dbReference>
<dbReference type="PDB" id="2M65">
    <property type="method" value="NMR"/>
    <property type="chains" value="A=1-199"/>
</dbReference>
<dbReference type="PDB" id="4XXO">
    <property type="method" value="X-ray"/>
    <property type="resolution" value="2.84 A"/>
    <property type="chains" value="A/B=1-199"/>
</dbReference>
<dbReference type="PDB" id="5KEG">
    <property type="method" value="X-ray"/>
    <property type="resolution" value="2.20 A"/>
    <property type="chains" value="A=1-199"/>
</dbReference>
<dbReference type="PDB" id="5SWW">
    <property type="method" value="X-ray"/>
    <property type="resolution" value="3.15 A"/>
    <property type="chains" value="A/B/C/D=1-196"/>
</dbReference>
<dbReference type="PDB" id="7D3V">
    <property type="method" value="NMR"/>
    <property type="chains" value="A/B=1-199"/>
</dbReference>
<dbReference type="PDB" id="7D3W">
    <property type="method" value="NMR"/>
    <property type="chains" value="A=1-199"/>
</dbReference>
<dbReference type="PDB" id="7D3X">
    <property type="method" value="NMR"/>
    <property type="chains" value="A=1-199"/>
</dbReference>
<dbReference type="PDB" id="8FII">
    <property type="method" value="X-ray"/>
    <property type="resolution" value="2.94 A"/>
    <property type="chains" value="A/B=1-199"/>
</dbReference>
<dbReference type="PDB" id="8FIJ">
    <property type="method" value="X-ray"/>
    <property type="resolution" value="2.80 A"/>
    <property type="chains" value="A/B=1-199"/>
</dbReference>
<dbReference type="PDB" id="8FIK">
    <property type="method" value="X-ray"/>
    <property type="resolution" value="1.91 A"/>
    <property type="chains" value="A/B=1-199"/>
</dbReference>
<dbReference type="PDB" id="8FIL">
    <property type="method" value="X-ray"/>
    <property type="resolution" value="2.01 A"/>
    <property type="chains" value="A/B=1-199"/>
</dbReference>
<dbReference type="PDB" id="8FIM">
    <property type="method" value="X-ray"/>
    <property type="resolution" value="2.22 A"/>
    <property type="chains" value="A/B=1-199"/>
</dbReference>
<dbReference type="PDBsum" id="2M65"/>
<dbReference type="PDBsum" id="4XXO"/>
<dbReference type="PDBsum" id="5KEG"/>
<dbReference type="PDBsum" id="5SWW"/>
<dbReference type="PDBsum" id="7D3V"/>
<dbReference type="PDBsum" id="7D3W"/>
<dbReference type="PDBsum" id="7D3X"/>
<dbReference type="PDBsum" id="8FII"/>
<dbReference type="PDBsum" id="8FIJ"/>
<dbReference type="PDBsum" id="8FIK"/>
<dbReference type="PDBsum" id="8FIL"/>
<dbReference type="PDBsum" id="8FIM"/>
<dbReference type="BMRB" id="P31941"/>
<dbReference type="SMR" id="P31941"/>
<dbReference type="BioGRID" id="128318">
    <property type="interactions" value="14"/>
</dbReference>
<dbReference type="DIP" id="DIP-61365N"/>
<dbReference type="FunCoup" id="P31941">
    <property type="interactions" value="135"/>
</dbReference>
<dbReference type="IntAct" id="P31941">
    <property type="interactions" value="8"/>
</dbReference>
<dbReference type="STRING" id="9606.ENSP00000384359"/>
<dbReference type="BindingDB" id="P31941"/>
<dbReference type="ChEMBL" id="CHEMBL1741179"/>
<dbReference type="iPTMnet" id="P31941"/>
<dbReference type="PhosphoSitePlus" id="P31941"/>
<dbReference type="BioMuta" id="APOBEC3A"/>
<dbReference type="DMDM" id="12644206"/>
<dbReference type="jPOST" id="P31941"/>
<dbReference type="MassIVE" id="P31941"/>
<dbReference type="PaxDb" id="9606-ENSP00000384359"/>
<dbReference type="PeptideAtlas" id="P31941"/>
<dbReference type="ProteomicsDB" id="54806">
    <molecule id="P31941-1"/>
</dbReference>
<dbReference type="ProteomicsDB" id="54807">
    <molecule id="P31941-2"/>
</dbReference>
<dbReference type="Pumba" id="P31941"/>
<dbReference type="ABCD" id="P31941">
    <property type="antibodies" value="1 sequenced antibody"/>
</dbReference>
<dbReference type="Antibodypedia" id="26513">
    <property type="antibodies" value="245 antibodies from 32 providers"/>
</dbReference>
<dbReference type="DNASU" id="200315"/>
<dbReference type="Ensembl" id="ENST00000249116.7">
    <molecule id="P31941-1"/>
    <property type="protein sequence ID" value="ENSP00000249116.2"/>
    <property type="gene ID" value="ENSG00000128383.14"/>
</dbReference>
<dbReference type="Ensembl" id="ENST00000402255.5">
    <molecule id="P31941-1"/>
    <property type="protein sequence ID" value="ENSP00000384359.1"/>
    <property type="gene ID" value="ENSG00000128383.14"/>
</dbReference>
<dbReference type="Ensembl" id="ENST00000570508.3">
    <molecule id="P31941-1"/>
    <property type="protein sequence ID" value="ENSP00000461288.1"/>
    <property type="gene ID" value="ENSG00000262156.6"/>
</dbReference>
<dbReference type="Ensembl" id="ENST00000623492.3">
    <molecule id="P31941-1"/>
    <property type="protein sequence ID" value="ENSP00000485234.1"/>
    <property type="gene ID" value="ENSG00000262156.6"/>
</dbReference>
<dbReference type="GeneID" id="100913187"/>
<dbReference type="GeneID" id="200315"/>
<dbReference type="KEGG" id="hsa:100913187"/>
<dbReference type="KEGG" id="hsa:200315"/>
<dbReference type="MANE-Select" id="ENST00000249116.7">
    <property type="protein sequence ID" value="ENSP00000249116.2"/>
    <property type="RefSeq nucleotide sequence ID" value="NM_145699.4"/>
    <property type="RefSeq protein sequence ID" value="NP_663745.1"/>
</dbReference>
<dbReference type="MANE-Select" id="ENST00000570508.3">
    <property type="protein sequence ID" value="ENSP00000461288.1"/>
    <property type="RefSeq nucleotide sequence ID" value="NM_001193289.2"/>
    <property type="RefSeq protein sequence ID" value="NP_001180218.1"/>
</dbReference>
<dbReference type="UCSC" id="uc003awn.2">
    <molecule id="P31941-1"/>
    <property type="organism name" value="human"/>
</dbReference>
<dbReference type="AGR" id="HGNC:17343"/>
<dbReference type="AGR" id="HGNC:44196"/>
<dbReference type="CTD" id="100913187"/>
<dbReference type="CTD" id="200315"/>
<dbReference type="DisGeNET" id="100913187"/>
<dbReference type="DisGeNET" id="200315"/>
<dbReference type="GeneCards" id="APOBEC3A"/>
<dbReference type="HGNC" id="HGNC:17343">
    <property type="gene designation" value="APOBEC3A"/>
</dbReference>
<dbReference type="HPA" id="ENSG00000128383">
    <property type="expression patterns" value="Group enriched (bone marrow, lymphoid tissue, urinary bladder)"/>
</dbReference>
<dbReference type="MIM" id="607109">
    <property type="type" value="gene"/>
</dbReference>
<dbReference type="neXtProt" id="NX_P31941"/>
<dbReference type="OpenTargets" id="ENSG00000128383"/>
<dbReference type="PharmGKB" id="PA24891"/>
<dbReference type="VEuPathDB" id="HostDB:ENSG00000128383"/>
<dbReference type="eggNOG" id="KOG4075">
    <property type="taxonomic scope" value="Eukaryota"/>
</dbReference>
<dbReference type="GeneTree" id="ENSGT00940000164701"/>
<dbReference type="HOGENOM" id="CLU_080056_2_0_1"/>
<dbReference type="InParanoid" id="P31941"/>
<dbReference type="OMA" id="GNRWMIL"/>
<dbReference type="OrthoDB" id="5956704at2759"/>
<dbReference type="PAN-GO" id="P31941">
    <property type="GO annotations" value="12 GO annotations based on evolutionary models"/>
</dbReference>
<dbReference type="PhylomeDB" id="P31941"/>
<dbReference type="TreeFam" id="TF331356"/>
<dbReference type="BRENDA" id="3.5.4.38">
    <property type="organism ID" value="2681"/>
</dbReference>
<dbReference type="PathwayCommons" id="P31941"/>
<dbReference type="Reactome" id="R-HSA-72200">
    <property type="pathway name" value="mRNA Editing: C to U Conversion"/>
</dbReference>
<dbReference type="Reactome" id="R-HSA-75094">
    <property type="pathway name" value="Formation of the Editosome"/>
</dbReference>
<dbReference type="SignaLink" id="P31941"/>
<dbReference type="SIGNOR" id="P31941"/>
<dbReference type="BioGRID-ORCS" id="100913187">
    <property type="hits" value="2 hits in 89 CRISPR screens"/>
</dbReference>
<dbReference type="BioGRID-ORCS" id="200315">
    <property type="hits" value="13 hits in 1139 CRISPR screens"/>
</dbReference>
<dbReference type="ChiTaRS" id="APOBEC3A">
    <property type="organism name" value="human"/>
</dbReference>
<dbReference type="EvolutionaryTrace" id="P31941"/>
<dbReference type="Pharos" id="P31941">
    <property type="development level" value="Tchem"/>
</dbReference>
<dbReference type="PRO" id="PR:P31941"/>
<dbReference type="Proteomes" id="UP000005640">
    <property type="component" value="Chromosome 22"/>
</dbReference>
<dbReference type="RNAct" id="P31941">
    <property type="molecule type" value="protein"/>
</dbReference>
<dbReference type="Bgee" id="ENSG00000128383">
    <property type="expression patterns" value="Expressed in monocyte and 136 other cell types or tissues"/>
</dbReference>
<dbReference type="ExpressionAtlas" id="P31941">
    <property type="expression patterns" value="baseline and differential"/>
</dbReference>
<dbReference type="GO" id="GO:0005737">
    <property type="term" value="C:cytoplasm"/>
    <property type="evidence" value="ECO:0000314"/>
    <property type="project" value="UniProtKB"/>
</dbReference>
<dbReference type="GO" id="GO:0005654">
    <property type="term" value="C:nucleoplasm"/>
    <property type="evidence" value="ECO:0000314"/>
    <property type="project" value="HPA"/>
</dbReference>
<dbReference type="GO" id="GO:0005634">
    <property type="term" value="C:nucleus"/>
    <property type="evidence" value="ECO:0000314"/>
    <property type="project" value="UniProtKB"/>
</dbReference>
<dbReference type="GO" id="GO:0000932">
    <property type="term" value="C:P-body"/>
    <property type="evidence" value="ECO:0000318"/>
    <property type="project" value="GO_Central"/>
</dbReference>
<dbReference type="GO" id="GO:0004126">
    <property type="term" value="F:cytidine deaminase activity"/>
    <property type="evidence" value="ECO:0000314"/>
    <property type="project" value="UniProtKB"/>
</dbReference>
<dbReference type="GO" id="GO:0003723">
    <property type="term" value="F:RNA binding"/>
    <property type="evidence" value="ECO:0000318"/>
    <property type="project" value="GO_Central"/>
</dbReference>
<dbReference type="GO" id="GO:0008270">
    <property type="term" value="F:zinc ion binding"/>
    <property type="evidence" value="ECO:0007669"/>
    <property type="project" value="InterPro"/>
</dbReference>
<dbReference type="GO" id="GO:0044355">
    <property type="term" value="P:clearance of foreign intracellular DNA"/>
    <property type="evidence" value="ECO:0000314"/>
    <property type="project" value="UniProtKB"/>
</dbReference>
<dbReference type="GO" id="GO:0016554">
    <property type="term" value="P:cytidine to uridine editing"/>
    <property type="evidence" value="ECO:0000318"/>
    <property type="project" value="GO_Central"/>
</dbReference>
<dbReference type="GO" id="GO:0051607">
    <property type="term" value="P:defense response to virus"/>
    <property type="evidence" value="ECO:0000314"/>
    <property type="project" value="UniProtKB"/>
</dbReference>
<dbReference type="GO" id="GO:0070383">
    <property type="term" value="P:DNA cytosine deamination"/>
    <property type="evidence" value="ECO:0000318"/>
    <property type="project" value="GO_Central"/>
</dbReference>
<dbReference type="GO" id="GO:0045087">
    <property type="term" value="P:innate immune response"/>
    <property type="evidence" value="ECO:0000314"/>
    <property type="project" value="UniProtKB"/>
</dbReference>
<dbReference type="GO" id="GO:0045869">
    <property type="term" value="P:negative regulation of single stranded viral RNA replication via double stranded DNA intermediate"/>
    <property type="evidence" value="ECO:0000318"/>
    <property type="project" value="GO_Central"/>
</dbReference>
<dbReference type="GO" id="GO:0045071">
    <property type="term" value="P:negative regulation of viral genome replication"/>
    <property type="evidence" value="ECO:0000314"/>
    <property type="project" value="UniProtKB"/>
</dbReference>
<dbReference type="GO" id="GO:0044029">
    <property type="term" value="P:positive regulation of gene expression via chromosomal CpG island demethylation"/>
    <property type="evidence" value="ECO:0000314"/>
    <property type="project" value="UniProtKB"/>
</dbReference>
<dbReference type="GO" id="GO:0010526">
    <property type="term" value="P:transposable element silencing"/>
    <property type="evidence" value="ECO:0000314"/>
    <property type="project" value="UniProtKB"/>
</dbReference>
<dbReference type="CDD" id="cd01283">
    <property type="entry name" value="cytidine_deaminase"/>
    <property type="match status" value="1"/>
</dbReference>
<dbReference type="FunFam" id="3.40.140.10:FF:000047">
    <property type="entry name" value="Apolipoprotein B editing enzyme catalytic polypeptide-like 3H"/>
    <property type="match status" value="1"/>
</dbReference>
<dbReference type="Gene3D" id="3.40.140.10">
    <property type="entry name" value="Cytidine Deaminase, domain 2"/>
    <property type="match status" value="1"/>
</dbReference>
<dbReference type="InterPro" id="IPR016192">
    <property type="entry name" value="APOBEC/CMP_deaminase_Zn-bd"/>
</dbReference>
<dbReference type="InterPro" id="IPR050610">
    <property type="entry name" value="APOBEC_Cyt_Deaminase"/>
</dbReference>
<dbReference type="InterPro" id="IPR002125">
    <property type="entry name" value="CMP_dCMP_dom"/>
</dbReference>
<dbReference type="InterPro" id="IPR016193">
    <property type="entry name" value="Cytidine_deaminase-like"/>
</dbReference>
<dbReference type="PANTHER" id="PTHR13857:SF39">
    <property type="entry name" value="DNA DC-DU-EDITING ENZYME APOBEC-3A-RELATED"/>
    <property type="match status" value="1"/>
</dbReference>
<dbReference type="PANTHER" id="PTHR13857">
    <property type="entry name" value="MRNA EDITING ENZYME"/>
    <property type="match status" value="1"/>
</dbReference>
<dbReference type="Pfam" id="PF18782">
    <property type="entry name" value="NAD2"/>
    <property type="match status" value="1"/>
</dbReference>
<dbReference type="SUPFAM" id="SSF53927">
    <property type="entry name" value="Cytidine deaminase-like"/>
    <property type="match status" value="1"/>
</dbReference>
<dbReference type="PROSITE" id="PS00903">
    <property type="entry name" value="CYT_DCMP_DEAMINASES_1"/>
    <property type="match status" value="1"/>
</dbReference>
<dbReference type="PROSITE" id="PS51747">
    <property type="entry name" value="CYT_DCMP_DEAMINASES_2"/>
    <property type="match status" value="1"/>
</dbReference>
<gene>
    <name type="primary">APOBEC3A</name>
</gene>
<keyword id="KW-0002">3D-structure</keyword>
<keyword id="KW-0024">Alternative initiation</keyword>
<keyword id="KW-0051">Antiviral defense</keyword>
<keyword id="KW-0963">Cytoplasm</keyword>
<keyword id="KW-0903">Direct protein sequencing</keyword>
<keyword id="KW-0378">Hydrolase</keyword>
<keyword id="KW-0391">Immunity</keyword>
<keyword id="KW-0399">Innate immunity</keyword>
<keyword id="KW-0479">Metal-binding</keyword>
<keyword id="KW-0539">Nucleus</keyword>
<keyword id="KW-1267">Proteomics identification</keyword>
<keyword id="KW-1185">Reference proteome</keyword>
<keyword id="KW-0862">Zinc</keyword>
<protein>
    <recommendedName>
        <fullName>DNA dC-&gt;dU-editing enzyme APOBEC-3A</fullName>
        <shortName>A3A</shortName>
        <ecNumber evidence="6 8 10 11">3.5.4.38</ecNumber>
    </recommendedName>
    <alternativeName>
        <fullName>Phorbolin-1</fullName>
    </alternativeName>
</protein>
<evidence type="ECO:0000250" key="1"/>
<evidence type="ECO:0000255" key="2">
    <source>
        <dbReference type="PROSITE-ProRule" id="PRU01083"/>
    </source>
</evidence>
<evidence type="ECO:0000269" key="3">
    <source>
    </source>
</evidence>
<evidence type="ECO:0000269" key="4">
    <source>
    </source>
</evidence>
<evidence type="ECO:0000269" key="5">
    <source>
    </source>
</evidence>
<evidence type="ECO:0000269" key="6">
    <source>
    </source>
</evidence>
<evidence type="ECO:0000269" key="7">
    <source>
    </source>
</evidence>
<evidence type="ECO:0000269" key="8">
    <source>
    </source>
</evidence>
<evidence type="ECO:0000269" key="9">
    <source>
    </source>
</evidence>
<evidence type="ECO:0000269" key="10">
    <source>
    </source>
</evidence>
<evidence type="ECO:0000269" key="11">
    <source>
    </source>
</evidence>
<evidence type="ECO:0000269" key="12">
    <source>
    </source>
</evidence>
<evidence type="ECO:0000269" key="13">
    <source>
    </source>
</evidence>
<evidence type="ECO:0000269" key="14">
    <source>
    </source>
</evidence>
<evidence type="ECO:0000269" key="15">
    <source>
    </source>
</evidence>
<evidence type="ECO:0000269" key="16">
    <source>
    </source>
</evidence>
<evidence type="ECO:0000269" key="17">
    <source>
    </source>
</evidence>
<evidence type="ECO:0000269" key="18">
    <source>
    </source>
</evidence>
<evidence type="ECO:0000305" key="19"/>
<evidence type="ECO:0007829" key="20">
    <source>
        <dbReference type="PDB" id="2M65"/>
    </source>
</evidence>
<evidence type="ECO:0007829" key="21">
    <source>
        <dbReference type="PDB" id="7D3V"/>
    </source>
</evidence>
<evidence type="ECO:0007829" key="22">
    <source>
        <dbReference type="PDB" id="7D3W"/>
    </source>
</evidence>
<evidence type="ECO:0007829" key="23">
    <source>
        <dbReference type="PDB" id="8FIK"/>
    </source>
</evidence>
<evidence type="ECO:0007829" key="24">
    <source>
        <dbReference type="PDB" id="8FIL"/>
    </source>
</evidence>
<name>ABC3A_HUMAN</name>
<comment type="function">
    <text evidence="3 5 6 7 8 10 11 12 13 14 15 16">DNA deaminase (cytidine deaminase) with restriction activity against viruses, foreign DNA and mobility of retrotransposons. Exhibits antiviral activity against adeno-associated virus (AAV) and human T-cell leukemia virus type 1 (HTLV-1) and may inhibit the mobility of LTR and non-LTR retrotransposons. Selectively targets single-stranded DNA and can deaminate both methylcytosine and cytosine in foreign DNA. Can induce somatic hypermutation in the nuclear and mitochondrial DNA. May also play a role in the epigenetic regulation of gene expression through the process of active DNA demethylation.</text>
</comment>
<comment type="catalytic activity">
    <reaction evidence="6 8 10 11">
        <text>a 2'-deoxycytidine in single-stranded DNA + H2O + H(+) = a 2'-deoxyuridine in single-stranded DNA + NH4(+)</text>
        <dbReference type="Rhea" id="RHEA:50948"/>
        <dbReference type="Rhea" id="RHEA-COMP:12846"/>
        <dbReference type="Rhea" id="RHEA-COMP:12847"/>
        <dbReference type="ChEBI" id="CHEBI:15377"/>
        <dbReference type="ChEBI" id="CHEBI:15378"/>
        <dbReference type="ChEBI" id="CHEBI:28938"/>
        <dbReference type="ChEBI" id="CHEBI:85452"/>
        <dbReference type="ChEBI" id="CHEBI:133902"/>
        <dbReference type="EC" id="3.5.4.38"/>
    </reaction>
</comment>
<comment type="cofactor">
    <cofactor evidence="1">
        <name>Zn(2+)</name>
        <dbReference type="ChEBI" id="CHEBI:29105"/>
    </cofactor>
</comment>
<comment type="subunit">
    <text evidence="17 18">Interacts with AGO2. Interacts with TRIB3 (via N-terminus).</text>
</comment>
<comment type="interaction">
    <interactant intactId="EBI-13050366">
        <id>P31941</id>
    </interactant>
    <interactant intactId="EBI-17557678">
        <id>Q16775-2</id>
        <label>HAGH</label>
    </interactant>
    <organismsDiffer>false</organismsDiffer>
    <experiments>3</experiments>
</comment>
<comment type="interaction">
    <interactant intactId="EBI-13050366">
        <id>P31941</id>
    </interactant>
    <interactant intactId="EBI-396676">
        <id>O95630</id>
        <label>STAMBP</label>
    </interactant>
    <organismsDiffer>false</organismsDiffer>
    <experiments>3</experiments>
</comment>
<comment type="interaction">
    <interactant intactId="EBI-13050366">
        <id>P31941</id>
    </interactant>
    <interactant intactId="EBI-11666471">
        <id>Q784Z8</id>
        <label>C</label>
    </interactant>
    <organismsDiffer>true</organismsDiffer>
    <experiments>4</experiments>
</comment>
<comment type="subcellular location">
    <subcellularLocation>
        <location>Nucleus</location>
    </subcellularLocation>
    <subcellularLocation>
        <location>Cytoplasm</location>
    </subcellularLocation>
</comment>
<comment type="alternative products">
    <event type="alternative initiation"/>
    <isoform>
        <id>P31941-1</id>
        <name>1</name>
        <name>Phorbolin-1</name>
        <sequence type="displayed"/>
    </isoform>
    <isoform>
        <id>P31941-2</id>
        <name>2</name>
        <sequence type="described" ref="VSP_041723"/>
    </isoform>
</comment>
<comment type="tissue specificity">
    <text evidence="4 6 8 9">Expressed in peripheral leukocytes with higher expression in CD14-positive phagocytic cells. Highly expressed in keratinocytes and in periphery blood monocytes. Also detected in non-lymphoid tissues including lung and adipose tissues. Found at high levels in colorectal adenocarcinoma, Burkitt's lymphoma and chronic myelogenous leukemia.</text>
</comment>
<comment type="induction">
    <text evidence="8 10">Up-regulated by interferon and CpG single-stranded DNA (at protein level).</text>
</comment>
<comment type="miscellaneous">
    <text>It is one of seven related genes or pseudogenes found in a cluster, thought to result from gene duplication, on chromosome 22.</text>
</comment>
<comment type="miscellaneous">
    <molecule>Isoform 1</molecule>
    <text>Enzymatically active.</text>
</comment>
<comment type="miscellaneous">
    <molecule>Isoform 2</molecule>
    <text evidence="19">Enzymatically active.</text>
</comment>
<comment type="similarity">
    <text evidence="19">Belongs to the cytidine and deoxycytidylate deaminase family.</text>
</comment>
<sequence>MEASPASGPRHLMDPHIFTSNFNNGIGRHKTYLCYEVERLDNGTSVKMDQHRGFLHNQAKNLLCGFYGRHAELRFLDLVPSLQLDPAQIYRVTWFISWSPCFSWGCAGEVRAFLQENTHVRLRIFAARIYDYDPLYKEALQMLRDAGAQVSIMTYDEFKHCWDTFVDHQGCPFQPWDGLDEHSQALSGRLRAILQNQGN</sequence>
<accession>P31941</accession>
<accession>A0AVM1</accession>
<accession>Q12807</accession>
<accession>Q5JZ93</accession>
<accession>Q9UH18</accession>
<reference key="1">
    <citation type="journal article" date="1999" name="J. Invest. Dermatol.">
        <title>Psoriasis upregulated phorbolin-1 shares structural but not functional similarity to the mRNA-editing protein apobec-1.</title>
        <authorList>
            <person name="Madsen P.P."/>
            <person name="Anant S."/>
            <person name="Rasmussen H.H."/>
            <person name="Gromov P."/>
            <person name="Vorum H."/>
            <person name="Dumanski J.P."/>
            <person name="Tommerup N."/>
            <person name="Collins J.E."/>
            <person name="Wright C.L."/>
            <person name="Dunham I."/>
            <person name="Macginnitie A.J."/>
            <person name="Davidson N.O."/>
            <person name="Celis J.E."/>
        </authorList>
    </citation>
    <scope>NUCLEOTIDE SEQUENCE [MRNA]</scope>
    <scope>PROTEIN SEQUENCE OF 19-27; 31-35; 53-60; 112-123; 129-137 AND 192-198</scope>
    <scope>FUNCTION</scope>
    <source>
        <tissue>Keratinocyte</tissue>
    </source>
</reference>
<reference key="2">
    <citation type="journal article" date="2004" name="Genome Biol.">
        <title>A genome annotation-driven approach to cloning the human ORFeome.</title>
        <authorList>
            <person name="Collins J.E."/>
            <person name="Wright C.L."/>
            <person name="Edwards C.A."/>
            <person name="Davis M.P."/>
            <person name="Grinham J.A."/>
            <person name="Cole C.G."/>
            <person name="Goward M.E."/>
            <person name="Aguado B."/>
            <person name="Mallya M."/>
            <person name="Mokrab Y."/>
            <person name="Huckle E.J."/>
            <person name="Beare D.M."/>
            <person name="Dunham I."/>
        </authorList>
    </citation>
    <scope>NUCLEOTIDE SEQUENCE [LARGE SCALE MRNA]</scope>
</reference>
<reference key="3">
    <citation type="journal article" date="1999" name="Nature">
        <title>The DNA sequence of human chromosome 22.</title>
        <authorList>
            <person name="Dunham I."/>
            <person name="Hunt A.R."/>
            <person name="Collins J.E."/>
            <person name="Bruskiewich R."/>
            <person name="Beare D.M."/>
            <person name="Clamp M."/>
            <person name="Smink L.J."/>
            <person name="Ainscough R."/>
            <person name="Almeida J.P."/>
            <person name="Babbage A.K."/>
            <person name="Bagguley C."/>
            <person name="Bailey J."/>
            <person name="Barlow K.F."/>
            <person name="Bates K.N."/>
            <person name="Beasley O.P."/>
            <person name="Bird C.P."/>
            <person name="Blakey S.E."/>
            <person name="Bridgeman A.M."/>
            <person name="Buck D."/>
            <person name="Burgess J."/>
            <person name="Burrill W.D."/>
            <person name="Burton J."/>
            <person name="Carder C."/>
            <person name="Carter N.P."/>
            <person name="Chen Y."/>
            <person name="Clark G."/>
            <person name="Clegg S.M."/>
            <person name="Cobley V.E."/>
            <person name="Cole C.G."/>
            <person name="Collier R.E."/>
            <person name="Connor R."/>
            <person name="Conroy D."/>
            <person name="Corby N.R."/>
            <person name="Coville G.J."/>
            <person name="Cox A.V."/>
            <person name="Davis J."/>
            <person name="Dawson E."/>
            <person name="Dhami P.D."/>
            <person name="Dockree C."/>
            <person name="Dodsworth S.J."/>
            <person name="Durbin R.M."/>
            <person name="Ellington A.G."/>
            <person name="Evans K.L."/>
            <person name="Fey J.M."/>
            <person name="Fleming K."/>
            <person name="French L."/>
            <person name="Garner A.A."/>
            <person name="Gilbert J.G.R."/>
            <person name="Goward M.E."/>
            <person name="Grafham D.V."/>
            <person name="Griffiths M.N.D."/>
            <person name="Hall C."/>
            <person name="Hall R.E."/>
            <person name="Hall-Tamlyn G."/>
            <person name="Heathcott R.W."/>
            <person name="Ho S."/>
            <person name="Holmes S."/>
            <person name="Hunt S.E."/>
            <person name="Jones M.C."/>
            <person name="Kershaw J."/>
            <person name="Kimberley A.M."/>
            <person name="King A."/>
            <person name="Laird G.K."/>
            <person name="Langford C.F."/>
            <person name="Leversha M.A."/>
            <person name="Lloyd C."/>
            <person name="Lloyd D.M."/>
            <person name="Martyn I.D."/>
            <person name="Mashreghi-Mohammadi M."/>
            <person name="Matthews L.H."/>
            <person name="Mccann O.T."/>
            <person name="Mcclay J."/>
            <person name="Mclaren S."/>
            <person name="McMurray A.A."/>
            <person name="Milne S.A."/>
            <person name="Mortimore B.J."/>
            <person name="Odell C.N."/>
            <person name="Pavitt R."/>
            <person name="Pearce A.V."/>
            <person name="Pearson D."/>
            <person name="Phillimore B.J.C.T."/>
            <person name="Phillips S.H."/>
            <person name="Plumb R.W."/>
            <person name="Ramsay H."/>
            <person name="Ramsey Y."/>
            <person name="Rogers L."/>
            <person name="Ross M.T."/>
            <person name="Scott C.E."/>
            <person name="Sehra H.K."/>
            <person name="Skuce C.D."/>
            <person name="Smalley S."/>
            <person name="Smith M.L."/>
            <person name="Soderlund C."/>
            <person name="Spragon L."/>
            <person name="Steward C.A."/>
            <person name="Sulston J.E."/>
            <person name="Swann R.M."/>
            <person name="Vaudin M."/>
            <person name="Wall M."/>
            <person name="Wallis J.M."/>
            <person name="Whiteley M.N."/>
            <person name="Willey D.L."/>
            <person name="Williams L."/>
            <person name="Williams S.A."/>
            <person name="Williamson H."/>
            <person name="Wilmer T.E."/>
            <person name="Wilming L."/>
            <person name="Wright C.L."/>
            <person name="Hubbard T."/>
            <person name="Bentley D.R."/>
            <person name="Beck S."/>
            <person name="Rogers J."/>
            <person name="Shimizu N."/>
            <person name="Minoshima S."/>
            <person name="Kawasaki K."/>
            <person name="Sasaki T."/>
            <person name="Asakawa S."/>
            <person name="Kudoh J."/>
            <person name="Shintani A."/>
            <person name="Shibuya K."/>
            <person name="Yoshizaki Y."/>
            <person name="Aoki N."/>
            <person name="Mitsuyama S."/>
            <person name="Roe B.A."/>
            <person name="Chen F."/>
            <person name="Chu L."/>
            <person name="Crabtree J."/>
            <person name="Deschamps S."/>
            <person name="Do A."/>
            <person name="Do T."/>
            <person name="Dorman A."/>
            <person name="Fang F."/>
            <person name="Fu Y."/>
            <person name="Hu P."/>
            <person name="Hua A."/>
            <person name="Kenton S."/>
            <person name="Lai H."/>
            <person name="Lao H.I."/>
            <person name="Lewis J."/>
            <person name="Lewis S."/>
            <person name="Lin S.-P."/>
            <person name="Loh P."/>
            <person name="Malaj E."/>
            <person name="Nguyen T."/>
            <person name="Pan H."/>
            <person name="Phan S."/>
            <person name="Qi S."/>
            <person name="Qian Y."/>
            <person name="Ray L."/>
            <person name="Ren Q."/>
            <person name="Shaull S."/>
            <person name="Sloan D."/>
            <person name="Song L."/>
            <person name="Wang Q."/>
            <person name="Wang Y."/>
            <person name="Wang Z."/>
            <person name="White J."/>
            <person name="Willingham D."/>
            <person name="Wu H."/>
            <person name="Yao Z."/>
            <person name="Zhan M."/>
            <person name="Zhang G."/>
            <person name="Chissoe S."/>
            <person name="Murray J."/>
            <person name="Miller N."/>
            <person name="Minx P."/>
            <person name="Fulton R."/>
            <person name="Johnson D."/>
            <person name="Bemis G."/>
            <person name="Bentley D."/>
            <person name="Bradshaw H."/>
            <person name="Bourne S."/>
            <person name="Cordes M."/>
            <person name="Du Z."/>
            <person name="Fulton L."/>
            <person name="Goela D."/>
            <person name="Graves T."/>
            <person name="Hawkins J."/>
            <person name="Hinds K."/>
            <person name="Kemp K."/>
            <person name="Latreille P."/>
            <person name="Layman D."/>
            <person name="Ozersky P."/>
            <person name="Rohlfing T."/>
            <person name="Scheet P."/>
            <person name="Walker C."/>
            <person name="Wamsley A."/>
            <person name="Wohldmann P."/>
            <person name="Pepin K."/>
            <person name="Nelson J."/>
            <person name="Korf I."/>
            <person name="Bedell J.A."/>
            <person name="Hillier L.W."/>
            <person name="Mardis E."/>
            <person name="Waterston R."/>
            <person name="Wilson R."/>
            <person name="Emanuel B.S."/>
            <person name="Shaikh T."/>
            <person name="Kurahashi H."/>
            <person name="Saitta S."/>
            <person name="Budarf M.L."/>
            <person name="McDermid H.E."/>
            <person name="Johnson A."/>
            <person name="Wong A.C.C."/>
            <person name="Morrow B.E."/>
            <person name="Edelmann L."/>
            <person name="Kim U.J."/>
            <person name="Shizuya H."/>
            <person name="Simon M.I."/>
            <person name="Dumanski J.P."/>
            <person name="Peyrard M."/>
            <person name="Kedra D."/>
            <person name="Seroussi E."/>
            <person name="Fransson I."/>
            <person name="Tapia I."/>
            <person name="Bruder C.E."/>
            <person name="O'Brien K.P."/>
            <person name="Wilkinson P."/>
            <person name="Bodenteich A."/>
            <person name="Hartman K."/>
            <person name="Hu X."/>
            <person name="Khan A.S."/>
            <person name="Lane L."/>
            <person name="Tilahun Y."/>
            <person name="Wright H."/>
        </authorList>
    </citation>
    <scope>NUCLEOTIDE SEQUENCE [LARGE SCALE GENOMIC DNA]</scope>
</reference>
<reference key="4">
    <citation type="journal article" date="2004" name="Genome Res.">
        <title>The status, quality, and expansion of the NIH full-length cDNA project: the Mammalian Gene Collection (MGC).</title>
        <authorList>
            <consortium name="The MGC Project Team"/>
        </authorList>
    </citation>
    <scope>NUCLEOTIDE SEQUENCE [LARGE SCALE MRNA]</scope>
    <source>
        <tissue>Brain</tissue>
    </source>
</reference>
<reference key="5">
    <citation type="journal article" date="1992" name="Electrophoresis">
        <title>Microsequences of 145 proteins recorded in the two-dimensional gel protein database of normal human epidermal keratinocytes.</title>
        <authorList>
            <person name="Rasmussen H.H."/>
            <person name="van Damme J."/>
            <person name="Puype M."/>
            <person name="Gesser B."/>
            <person name="Celis J.E."/>
            <person name="Vandekerckhove J."/>
        </authorList>
    </citation>
    <scope>PROTEIN SEQUENCE OF 53-60; 112-121 AND 129-137</scope>
    <source>
        <tissue>Keratinocyte</tissue>
    </source>
</reference>
<reference key="6">
    <citation type="journal article" date="2002" name="Genomics">
        <title>An anthropoid-specific locus of orphan C to U RNA-editing enzymes on chromosome 22.</title>
        <authorList>
            <person name="Jarmuz A."/>
            <person name="Chester A."/>
            <person name="Bayliss J."/>
            <person name="Gisbourne J."/>
            <person name="Dunham I."/>
            <person name="Scott J."/>
            <person name="Navaratnam N."/>
        </authorList>
    </citation>
    <scope>GENE FAMILY ORGANIZATION</scope>
    <scope>TISSUE SPECIFICITY</scope>
</reference>
<reference key="7">
    <citation type="journal article" date="2003" name="Trends Genet.">
        <title>Messenger RNA editing in mammals: new members of the APOBEC family seeking roles in the family business.</title>
        <authorList>
            <person name="Wedekind J.E."/>
            <person name="Dance G.S.C."/>
            <person name="Sowden M.P."/>
            <person name="Smith H.C."/>
        </authorList>
    </citation>
    <scope>REVIEW ON APOBEC FAMILIES</scope>
</reference>
<reference key="8">
    <citation type="journal article" date="2003" name="Cell">
        <title>Species-specific exclusion of APOBEC3G from HIV-1 virions by Vif.</title>
        <authorList>
            <person name="Mariani R."/>
            <person name="Chen D."/>
            <person name="Schroefelbauer B."/>
            <person name="Navarro F."/>
            <person name="Koenig R."/>
            <person name="Bollman B."/>
            <person name="Muenk C."/>
            <person name="Nymark-McMahon H."/>
            <person name="Landau N.R."/>
        </authorList>
    </citation>
    <scope>FUNCTION IN HOST DEFENSE</scope>
</reference>
<reference key="9">
    <citation type="journal article" date="2006" name="Curr. Biol.">
        <title>APOBEC3A is a potent inhibitor of adeno-associated virus and retrotransposons.</title>
        <authorList>
            <person name="Chen H."/>
            <person name="Lilley C.E."/>
            <person name="Yu Q."/>
            <person name="Lee D.V."/>
            <person name="Chou J."/>
            <person name="Narvaiza I."/>
            <person name="Landau N.R."/>
            <person name="Weitzman M.D."/>
        </authorList>
    </citation>
    <scope>FUNCTION IN HOST DEFENSE</scope>
    <scope>CATALYTIC ACTIVITY</scope>
    <scope>SUBCELLULAR LOCATION</scope>
    <scope>MUTAGENESIS OF HIS-70; GLU-72 AND CYS-106</scope>
    <scope>TISSUE SPECIFICITY</scope>
</reference>
<reference key="10">
    <citation type="journal article" date="2008" name="Annu. Rev. Immunol.">
        <title>The APOBEC3 cytidine deaminases: an innate defensive network opposing exogenous retroviruses and endogenous retroelements.</title>
        <authorList>
            <person name="Chiu Y.L."/>
            <person name="Greene W.C."/>
        </authorList>
    </citation>
    <scope>REVIEW</scope>
</reference>
<reference key="11">
    <citation type="journal article" date="2009" name="PLoS Pathog.">
        <title>Deaminase-independent inhibition of parvoviruses by the APOBEC3A cytidine deaminase.</title>
        <authorList>
            <person name="Narvaiza I."/>
            <person name="Linfesty D.C."/>
            <person name="Greener B.N."/>
            <person name="Hakata Y."/>
            <person name="Pintel D.J."/>
            <person name="Logue E."/>
            <person name="Landau N.R."/>
            <person name="Weitzman M.D."/>
        </authorList>
    </citation>
    <scope>FUNCTION IN AAV INHIBITION</scope>
    <scope>SUBCELLULAR LOCATION</scope>
</reference>
<reference key="12">
    <citation type="journal article" date="2010" name="J. Biol. Chem.">
        <title>Innate immune signaling induces high levels of TC-specific deaminase activity in primary monocyte-derived cells through expression of APOBEC3A isoforms.</title>
        <authorList>
            <person name="Thielen B.K."/>
            <person name="McNevin J.P."/>
            <person name="McElrath M.J."/>
            <person name="Hunt B.V."/>
            <person name="Klein K.C."/>
            <person name="Lingappa J.R."/>
        </authorList>
    </citation>
    <scope>FUNCTION</scope>
    <scope>CATALYTIC ACTIVITY</scope>
    <scope>INDUCTION</scope>
    <scope>ALTERNATIVE SPLICING (ISOFORMS 1 AND 2)</scope>
</reference>
<reference key="13">
    <citation type="journal article" date="2010" name="Nat. Struct. Mol. Biol.">
        <title>APOBEC3 proteins mediate the clearance of foreign DNA from human cells.</title>
        <authorList>
            <person name="Stenglein M.D."/>
            <person name="Burns M.B."/>
            <person name="Li M."/>
            <person name="Lengyel J."/>
            <person name="Harris R.S."/>
        </authorList>
    </citation>
    <scope>FUNCTION IN FOREIGN DNA CLEARANCE</scope>
    <scope>CATALYTIC ACTIVITY</scope>
    <scope>TISSUE SPECIFICITY</scope>
    <scope>INDUCTION</scope>
</reference>
<reference key="14">
    <citation type="journal article" date="2010" name="Nucleic Acids Res.">
        <title>Quantitative profiling of the full APOBEC3 mRNA repertoire in lymphocytes and tissues: implications for HIV-1 restriction.</title>
        <authorList>
            <person name="Refsland E.W."/>
            <person name="Stenglein M.D."/>
            <person name="Shindo K."/>
            <person name="Albin J.S."/>
            <person name="Brown W.L."/>
            <person name="Harris R.S."/>
        </authorList>
    </citation>
    <scope>TISSUE SPECIFICITY</scope>
</reference>
<reference key="15">
    <citation type="journal article" date="2011" name="Cell">
        <title>Hydroxylation of 5-methylcytosine by TET1 promotes active DNA demethylation in the adult brain.</title>
        <authorList>
            <person name="Guo J.U."/>
            <person name="Su Y."/>
            <person name="Zhong C."/>
            <person name="Ming G.L."/>
            <person name="Song H."/>
        </authorList>
    </citation>
    <scope>FUNCTION IN DNA DEMETHYLATION</scope>
</reference>
<reference key="16">
    <citation type="journal article" date="2011" name="EMBO Rep.">
        <title>APOBEC3A can activate the DNA damage response and cause cell-cycle arrest.</title>
        <authorList>
            <person name="Landry S."/>
            <person name="Narvaiza I."/>
            <person name="Linfesty D.C."/>
            <person name="Weitzman M.D."/>
        </authorList>
    </citation>
    <scope>FUNCTION</scope>
</reference>
<reference key="17">
    <citation type="journal article" date="2011" name="J. Virol.">
        <title>Structure-function analyses point to a polynucleotide-accommodating groove essential for APOBEC3A restriction activities.</title>
        <authorList>
            <person name="Bulliard Y."/>
            <person name="Narvaiza I."/>
            <person name="Bertero A."/>
            <person name="Peddi S."/>
            <person name="Roehrig U.F."/>
            <person name="Ortiz M."/>
            <person name="Zoete V."/>
            <person name="Castro-Diaz N."/>
            <person name="Turelli P."/>
            <person name="Telenti A."/>
            <person name="Michielin O."/>
            <person name="Weitzman M.D."/>
            <person name="Trono D."/>
        </authorList>
    </citation>
    <scope>FUNCTION IN HOST DEFENSE</scope>
    <scope>CATALYTIC ACTIVITY</scope>
    <scope>SUBCELLULAR LOCATION</scope>
    <scope>MUTAGENESIS OF ARG-28; HIS-29; LYS-30; ASN-57; LYS-60; ARG-69; GLU-72; TRP-98; ARG-128; TYR-130; ASP-131; ASP-133 AND TYR-136</scope>
</reference>
<reference key="18">
    <citation type="journal article" date="2011" name="J. Virol.">
        <title>Human and rhesus APOBEC3D, APOBEC3F, APOBEC3G, and APOBEC3H demonstrate a conserved capacity to restrict Vif-deficient HIV-1.</title>
        <authorList>
            <person name="Hultquist J.F."/>
            <person name="Lengyel J.A."/>
            <person name="Refsland E.W."/>
            <person name="LaRue R.S."/>
            <person name="Lackey L."/>
            <person name="Brown W.L."/>
            <person name="Harris R.S."/>
        </authorList>
    </citation>
    <scope>SUBCELLULAR LOCATION</scope>
</reference>
<reference key="19">
    <citation type="journal article" date="2011" name="Proc. Natl. Acad. Sci. U.S.A.">
        <title>Somatic hypermutation of human mitochondrial and nuclear DNA by APOBEC3 cytidine deaminases, a pathway for DNA catabolism.</title>
        <authorList>
            <person name="Suspene R."/>
            <person name="Aynaud M.M."/>
            <person name="Guetard D."/>
            <person name="Henry M."/>
            <person name="Eckhoff G."/>
            <person name="Marchio A."/>
            <person name="Pineau P."/>
            <person name="Dejean A."/>
            <person name="Vartanian J.P."/>
            <person name="Wain-Hobson S."/>
        </authorList>
    </citation>
    <scope>FUNCTION</scope>
</reference>
<reference key="20">
    <citation type="journal article" date="2011" name="Student Perspec. Contemp. Virol.">
        <title>Cytosine deaminases APOBEC3A, APOBEC3C, and APOBEC3H: Current understanding of their functional roles.</title>
        <authorList>
            <person name="Love R."/>
        </authorList>
    </citation>
    <scope>REVIEW</scope>
</reference>
<reference key="21">
    <citation type="journal article" date="2012" name="Front. Microbiol.">
        <title>Retroelements versus APOBEC3 family members: No great escape from the magnificent seven.</title>
        <authorList>
            <person name="Arias J.F."/>
            <person name="Koyama T."/>
            <person name="Kinomoto M."/>
            <person name="Tokunaga K."/>
        </authorList>
    </citation>
    <scope>REVIEW</scope>
</reference>
<reference key="22">
    <citation type="journal article" date="2012" name="J. Biol. Chem.">
        <title>Methylcytosine and normal cytosine deamination by the foreign DNA restriction enzyme APOBEC3A.</title>
        <authorList>
            <person name="Carpenter M.A."/>
            <person name="Li M."/>
            <person name="Rathore A."/>
            <person name="Lackey L."/>
            <person name="Law E.K."/>
            <person name="Land A.M."/>
            <person name="Leonard B."/>
            <person name="Shandilya S.M."/>
            <person name="Bohn M.F."/>
            <person name="Schiffer C.A."/>
            <person name="Brown W.L."/>
            <person name="Harris R.S."/>
        </authorList>
    </citation>
    <scope>FUNCTION</scope>
</reference>
<reference key="23">
    <citation type="journal article" date="2012" name="J. Biol. Chem.">
        <title>Human Tribbles 3 protects nuclear DNA from cytidine deamination by APOBEC3A.</title>
        <authorList>
            <person name="Aynaud M.M."/>
            <person name="Suspene R."/>
            <person name="Vidalain P.O."/>
            <person name="Mussil B."/>
            <person name="Guetard D."/>
            <person name="Tangy F."/>
            <person name="Wain-Hobson S."/>
            <person name="Vartanian J.P."/>
        </authorList>
    </citation>
    <scope>INTERACTION WITH TRIB3</scope>
    <scope>SUBCELLULAR LOCATION</scope>
</reference>
<reference key="24">
    <citation type="journal article" date="2012" name="J. Virol.">
        <title>APOBEC3A, APOBEC3B, and APOBEC3H haplotype 2 restrict human T-lymphotropic virus type 1.</title>
        <authorList>
            <person name="Ooms M."/>
            <person name="Krikoni A."/>
            <person name="Kress A.K."/>
            <person name="Simon V."/>
            <person name="Muenk C."/>
        </authorList>
    </citation>
    <scope>FUNCTION IN HTLV-1 RESTRICTION</scope>
</reference>
<reference key="25">
    <citation type="journal article" date="2012" name="J. Virol.">
        <title>HIV-1 replication and APOBEC3 antiviral activity are not regulated by P bodies.</title>
        <authorList>
            <person name="Phalora P.K."/>
            <person name="Sherer N.M."/>
            <person name="Wolinsky S.M."/>
            <person name="Swanson C.M."/>
            <person name="Malim M.H."/>
        </authorList>
    </citation>
    <scope>INTERACTION WITH AGO2</scope>
</reference>
<reference key="26">
    <citation type="journal article" date="2012" name="Semin. Cell Dev. Biol.">
        <title>Functions and regulation of the APOBEC family of proteins.</title>
        <authorList>
            <person name="Smith H.C."/>
            <person name="Bennett R.P."/>
            <person name="Kizilyer A."/>
            <person name="McDougall W.M."/>
            <person name="Prohaska K.M."/>
        </authorList>
    </citation>
    <scope>REVIEW</scope>
</reference>